<organism>
    <name type="scientific">Corynebacterium glutamicum (strain ATCC 13032 / DSM 20300 / JCM 1318 / BCRC 11384 / CCUG 27702 / LMG 3730 / NBRC 12168 / NCIMB 10025 / NRRL B-2784 / 534)</name>
    <dbReference type="NCBI Taxonomy" id="196627"/>
    <lineage>
        <taxon>Bacteria</taxon>
        <taxon>Bacillati</taxon>
        <taxon>Actinomycetota</taxon>
        <taxon>Actinomycetes</taxon>
        <taxon>Mycobacteriales</taxon>
        <taxon>Corynebacteriaceae</taxon>
        <taxon>Corynebacterium</taxon>
    </lineage>
</organism>
<accession>Q8NT75</accession>
<dbReference type="EC" id="4.1.1.37" evidence="1"/>
<dbReference type="EMBL" id="BA000036">
    <property type="protein sequence ID" value="BAB97828.1"/>
    <property type="molecule type" value="Genomic_DNA"/>
</dbReference>
<dbReference type="EMBL" id="BX927149">
    <property type="protein sequence ID" value="CAF19151.1"/>
    <property type="molecule type" value="Genomic_DNA"/>
</dbReference>
<dbReference type="RefSeq" id="NP_599682.1">
    <property type="nucleotide sequence ID" value="NC_003450.3"/>
</dbReference>
<dbReference type="RefSeq" id="WP_011265560.1">
    <property type="nucleotide sequence ID" value="NC_006958.1"/>
</dbReference>
<dbReference type="SMR" id="Q8NT75"/>
<dbReference type="STRING" id="196627.cg0516"/>
<dbReference type="GeneID" id="1021107"/>
<dbReference type="KEGG" id="cgb:cg0516"/>
<dbReference type="KEGG" id="cgl:Cgl0435"/>
<dbReference type="PATRIC" id="fig|196627.13.peg.434"/>
<dbReference type="eggNOG" id="COG0407">
    <property type="taxonomic scope" value="Bacteria"/>
</dbReference>
<dbReference type="HOGENOM" id="CLU_040933_0_1_11"/>
<dbReference type="OrthoDB" id="9806656at2"/>
<dbReference type="BioCyc" id="CORYNE:G18NG-9992-MONOMER"/>
<dbReference type="UniPathway" id="UPA00251">
    <property type="reaction ID" value="UER00321"/>
</dbReference>
<dbReference type="Proteomes" id="UP000000582">
    <property type="component" value="Chromosome"/>
</dbReference>
<dbReference type="Proteomes" id="UP000001009">
    <property type="component" value="Chromosome"/>
</dbReference>
<dbReference type="GO" id="GO:0005829">
    <property type="term" value="C:cytosol"/>
    <property type="evidence" value="ECO:0007669"/>
    <property type="project" value="TreeGrafter"/>
</dbReference>
<dbReference type="GO" id="GO:0004853">
    <property type="term" value="F:uroporphyrinogen decarboxylase activity"/>
    <property type="evidence" value="ECO:0007669"/>
    <property type="project" value="UniProtKB-UniRule"/>
</dbReference>
<dbReference type="GO" id="GO:0006782">
    <property type="term" value="P:protoporphyrinogen IX biosynthetic process"/>
    <property type="evidence" value="ECO:0007669"/>
    <property type="project" value="UniProtKB-UniRule"/>
</dbReference>
<dbReference type="CDD" id="cd00717">
    <property type="entry name" value="URO-D"/>
    <property type="match status" value="1"/>
</dbReference>
<dbReference type="Gene3D" id="3.20.20.210">
    <property type="match status" value="1"/>
</dbReference>
<dbReference type="HAMAP" id="MF_00218">
    <property type="entry name" value="URO_D"/>
    <property type="match status" value="1"/>
</dbReference>
<dbReference type="InterPro" id="IPR038071">
    <property type="entry name" value="UROD/MetE-like_sf"/>
</dbReference>
<dbReference type="InterPro" id="IPR006361">
    <property type="entry name" value="Uroporphyrinogen_deCO2ase_HemE"/>
</dbReference>
<dbReference type="InterPro" id="IPR000257">
    <property type="entry name" value="Uroporphyrinogen_deCOase"/>
</dbReference>
<dbReference type="NCBIfam" id="TIGR01464">
    <property type="entry name" value="hemE"/>
    <property type="match status" value="1"/>
</dbReference>
<dbReference type="PANTHER" id="PTHR21091">
    <property type="entry name" value="METHYLTETRAHYDROFOLATE:HOMOCYSTEINE METHYLTRANSFERASE RELATED"/>
    <property type="match status" value="1"/>
</dbReference>
<dbReference type="PANTHER" id="PTHR21091:SF169">
    <property type="entry name" value="UROPORPHYRINOGEN DECARBOXYLASE"/>
    <property type="match status" value="1"/>
</dbReference>
<dbReference type="Pfam" id="PF01208">
    <property type="entry name" value="URO-D"/>
    <property type="match status" value="1"/>
</dbReference>
<dbReference type="SUPFAM" id="SSF51726">
    <property type="entry name" value="UROD/MetE-like"/>
    <property type="match status" value="1"/>
</dbReference>
<dbReference type="PROSITE" id="PS00906">
    <property type="entry name" value="UROD_1"/>
    <property type="match status" value="1"/>
</dbReference>
<dbReference type="PROSITE" id="PS00907">
    <property type="entry name" value="UROD_2"/>
    <property type="match status" value="1"/>
</dbReference>
<comment type="function">
    <text evidence="1">Catalyzes the decarboxylation of four acetate groups of uroporphyrinogen-III to yield coproporphyrinogen-III.</text>
</comment>
<comment type="catalytic activity">
    <reaction evidence="1">
        <text>uroporphyrinogen III + 4 H(+) = coproporphyrinogen III + 4 CO2</text>
        <dbReference type="Rhea" id="RHEA:19865"/>
        <dbReference type="ChEBI" id="CHEBI:15378"/>
        <dbReference type="ChEBI" id="CHEBI:16526"/>
        <dbReference type="ChEBI" id="CHEBI:57308"/>
        <dbReference type="ChEBI" id="CHEBI:57309"/>
        <dbReference type="EC" id="4.1.1.37"/>
    </reaction>
</comment>
<comment type="pathway">
    <text evidence="1">Porphyrin-containing compound metabolism; protoporphyrin-IX biosynthesis; coproporphyrinogen-III from 5-aminolevulinate: step 4/4.</text>
</comment>
<comment type="subunit">
    <text evidence="1">Homodimer.</text>
</comment>
<comment type="subcellular location">
    <subcellularLocation>
        <location evidence="1">Cytoplasm</location>
    </subcellularLocation>
</comment>
<comment type="similarity">
    <text evidence="1">Belongs to the uroporphyrinogen decarboxylase family.</text>
</comment>
<sequence>MSALTIPAARRTLNNAPIIDAANGKTPTRTPVWFMRQAGRSLPEYKKVREGISMLDSCFMPELLAEITLQPVRRHDVDAAILFSDIVVPLRAAGVGVEIVAGRGPVLDAPVRSRGDVLNLPILEGNVPEVEQGIGIILDELSDSQALIGFAGAPFTLASYLVEGGPSKNHEKTKAMMHGDPETWHALMARLVPTIVNSLKSQIDAGIDAVQLFDSWAGFLTERDYTEFVLPYSTEILEEVGKYQLPRIHFGVGTGELLGAMSKAGSEVMGVDWRVPLDKAAERIAAVSGPKVLQGNLDPALLFAGRAPLTKEIERIKAEAQTAVDAGHATGHIFNLGHGVLPNTVAEDITEAVSIIHS</sequence>
<keyword id="KW-0963">Cytoplasm</keyword>
<keyword id="KW-0210">Decarboxylase</keyword>
<keyword id="KW-0456">Lyase</keyword>
<keyword id="KW-0627">Porphyrin biosynthesis</keyword>
<keyword id="KW-1185">Reference proteome</keyword>
<reference key="1">
    <citation type="journal article" date="2003" name="Appl. Microbiol. Biotechnol.">
        <title>The Corynebacterium glutamicum genome: features and impacts on biotechnological processes.</title>
        <authorList>
            <person name="Ikeda M."/>
            <person name="Nakagawa S."/>
        </authorList>
    </citation>
    <scope>NUCLEOTIDE SEQUENCE [LARGE SCALE GENOMIC DNA]</scope>
    <source>
        <strain>ATCC 13032 / DSM 20300 / JCM 1318 / BCRC 11384 / CCUG 27702 / LMG 3730 / NBRC 12168 / NCIMB 10025 / NRRL B-2784 / 534</strain>
    </source>
</reference>
<reference key="2">
    <citation type="journal article" date="2003" name="J. Biotechnol.">
        <title>The complete Corynebacterium glutamicum ATCC 13032 genome sequence and its impact on the production of L-aspartate-derived amino acids and vitamins.</title>
        <authorList>
            <person name="Kalinowski J."/>
            <person name="Bathe B."/>
            <person name="Bartels D."/>
            <person name="Bischoff N."/>
            <person name="Bott M."/>
            <person name="Burkovski A."/>
            <person name="Dusch N."/>
            <person name="Eggeling L."/>
            <person name="Eikmanns B.J."/>
            <person name="Gaigalat L."/>
            <person name="Goesmann A."/>
            <person name="Hartmann M."/>
            <person name="Huthmacher K."/>
            <person name="Kraemer R."/>
            <person name="Linke B."/>
            <person name="McHardy A.C."/>
            <person name="Meyer F."/>
            <person name="Moeckel B."/>
            <person name="Pfefferle W."/>
            <person name="Puehler A."/>
            <person name="Rey D.A."/>
            <person name="Rueckert C."/>
            <person name="Rupp O."/>
            <person name="Sahm H."/>
            <person name="Wendisch V.F."/>
            <person name="Wiegraebe I."/>
            <person name="Tauch A."/>
        </authorList>
    </citation>
    <scope>NUCLEOTIDE SEQUENCE [LARGE SCALE GENOMIC DNA]</scope>
    <source>
        <strain>ATCC 13032 / DSM 20300 / JCM 1318 / BCRC 11384 / CCUG 27702 / LMG 3730 / NBRC 12168 / NCIMB 10025 / NRRL B-2784 / 534</strain>
    </source>
</reference>
<proteinExistence type="inferred from homology"/>
<gene>
    <name evidence="1" type="primary">hemE</name>
    <name type="ordered locus">Cgl0435</name>
    <name type="ordered locus">cg0516</name>
</gene>
<feature type="chain" id="PRO_0000187600" description="Uroporphyrinogen decarboxylase">
    <location>
        <begin position="1"/>
        <end position="358"/>
    </location>
</feature>
<feature type="binding site" evidence="1">
    <location>
        <begin position="36"/>
        <end position="40"/>
    </location>
    <ligand>
        <name>substrate</name>
    </ligand>
</feature>
<feature type="binding site" evidence="1">
    <location>
        <position position="85"/>
    </location>
    <ligand>
        <name>substrate</name>
    </ligand>
</feature>
<feature type="binding site" evidence="1">
    <location>
        <position position="160"/>
    </location>
    <ligand>
        <name>substrate</name>
    </ligand>
</feature>
<feature type="binding site" evidence="1">
    <location>
        <position position="215"/>
    </location>
    <ligand>
        <name>substrate</name>
    </ligand>
</feature>
<feature type="binding site" evidence="1">
    <location>
        <position position="338"/>
    </location>
    <ligand>
        <name>substrate</name>
    </ligand>
</feature>
<feature type="site" description="Transition state stabilizer" evidence="1">
    <location>
        <position position="85"/>
    </location>
</feature>
<name>DCUP_CORGL</name>
<evidence type="ECO:0000255" key="1">
    <source>
        <dbReference type="HAMAP-Rule" id="MF_00218"/>
    </source>
</evidence>
<protein>
    <recommendedName>
        <fullName evidence="1">Uroporphyrinogen decarboxylase</fullName>
        <shortName evidence="1">UPD</shortName>
        <shortName evidence="1">URO-D</shortName>
        <ecNumber evidence="1">4.1.1.37</ecNumber>
    </recommendedName>
</protein>